<evidence type="ECO:0000255" key="1">
    <source>
        <dbReference type="HAMAP-Rule" id="MF_00537"/>
    </source>
</evidence>
<evidence type="ECO:0000269" key="2">
    <source>
    </source>
</evidence>
<evidence type="ECO:0000269" key="3">
    <source>
    </source>
</evidence>
<evidence type="ECO:0000305" key="4"/>
<reference key="1">
    <citation type="journal article" date="2003" name="Nucleic Acids Res.">
        <title>The complete nucleotide sequence of the hornwort (Anthoceros formosae) chloroplast genome: insight into the earliest land plants.</title>
        <authorList>
            <person name="Kugita M."/>
            <person name="Kaneko A."/>
            <person name="Yamamoto Y."/>
            <person name="Takeya Y."/>
            <person name="Matsumoto T."/>
            <person name="Yoshinaga K."/>
        </authorList>
    </citation>
    <scope>NUCLEOTIDE SEQUENCE [LARGE SCALE GENOMIC DNA]</scope>
    <scope>RNA EDITING</scope>
</reference>
<reference key="2">
    <citation type="journal article" date="2003" name="Nucleic Acids Res.">
        <title>RNA editing in hornwort chloroplasts makes more than half the genes functional.</title>
        <authorList>
            <person name="Kugita M."/>
            <person name="Yamamoto Y."/>
            <person name="Fujikawa T."/>
            <person name="Matsumoto T."/>
            <person name="Yoshinaga K."/>
        </authorList>
    </citation>
    <scope>NUCLEOTIDE SEQUENCE [MRNA]</scope>
    <scope>RNA EDITING</scope>
    <source>
        <tissue>Thallus</tissue>
    </source>
</reference>
<dbReference type="EMBL" id="AB086179">
    <property type="protein sequence ID" value="BAC55347.1"/>
    <property type="molecule type" value="Genomic_DNA"/>
</dbReference>
<dbReference type="EMBL" id="AB087439">
    <property type="protein sequence ID" value="BAC55440.1"/>
    <property type="molecule type" value="mRNA"/>
</dbReference>
<dbReference type="RefSeq" id="NP_777411.1">
    <property type="nucleotide sequence ID" value="NC_004543.1"/>
</dbReference>
<dbReference type="SMR" id="Q85CU9"/>
<dbReference type="GeneID" id="2553428"/>
<dbReference type="GO" id="GO:0009507">
    <property type="term" value="C:chloroplast"/>
    <property type="evidence" value="ECO:0007669"/>
    <property type="project" value="UniProtKB-SubCell"/>
</dbReference>
<dbReference type="GO" id="GO:0015935">
    <property type="term" value="C:small ribosomal subunit"/>
    <property type="evidence" value="ECO:0007669"/>
    <property type="project" value="TreeGrafter"/>
</dbReference>
<dbReference type="GO" id="GO:0019843">
    <property type="term" value="F:rRNA binding"/>
    <property type="evidence" value="ECO:0007669"/>
    <property type="project" value="UniProtKB-UniRule"/>
</dbReference>
<dbReference type="GO" id="GO:0003735">
    <property type="term" value="F:structural constituent of ribosome"/>
    <property type="evidence" value="ECO:0007669"/>
    <property type="project" value="InterPro"/>
</dbReference>
<dbReference type="GO" id="GO:0006412">
    <property type="term" value="P:translation"/>
    <property type="evidence" value="ECO:0007669"/>
    <property type="project" value="UniProtKB-UniRule"/>
</dbReference>
<dbReference type="FunFam" id="1.10.287.1480:FF:000001">
    <property type="entry name" value="30S ribosomal protein S14"/>
    <property type="match status" value="1"/>
</dbReference>
<dbReference type="Gene3D" id="1.10.287.1480">
    <property type="match status" value="1"/>
</dbReference>
<dbReference type="HAMAP" id="MF_00537">
    <property type="entry name" value="Ribosomal_uS14_1"/>
    <property type="match status" value="1"/>
</dbReference>
<dbReference type="InterPro" id="IPR001209">
    <property type="entry name" value="Ribosomal_uS14"/>
</dbReference>
<dbReference type="InterPro" id="IPR023036">
    <property type="entry name" value="Ribosomal_uS14_bac/plastid"/>
</dbReference>
<dbReference type="InterPro" id="IPR018271">
    <property type="entry name" value="Ribosomal_uS14_CS"/>
</dbReference>
<dbReference type="NCBIfam" id="NF006477">
    <property type="entry name" value="PRK08881.1"/>
    <property type="match status" value="1"/>
</dbReference>
<dbReference type="PANTHER" id="PTHR19836">
    <property type="entry name" value="30S RIBOSOMAL PROTEIN S14"/>
    <property type="match status" value="1"/>
</dbReference>
<dbReference type="PANTHER" id="PTHR19836:SF19">
    <property type="entry name" value="SMALL RIBOSOMAL SUBUNIT PROTEIN US14M"/>
    <property type="match status" value="1"/>
</dbReference>
<dbReference type="Pfam" id="PF00253">
    <property type="entry name" value="Ribosomal_S14"/>
    <property type="match status" value="1"/>
</dbReference>
<dbReference type="SUPFAM" id="SSF57716">
    <property type="entry name" value="Glucocorticoid receptor-like (DNA-binding domain)"/>
    <property type="match status" value="1"/>
</dbReference>
<dbReference type="PROSITE" id="PS00527">
    <property type="entry name" value="RIBOSOMAL_S14"/>
    <property type="match status" value="1"/>
</dbReference>
<keyword id="KW-0150">Chloroplast</keyword>
<keyword id="KW-0934">Plastid</keyword>
<keyword id="KW-0687">Ribonucleoprotein</keyword>
<keyword id="KW-0689">Ribosomal protein</keyword>
<keyword id="KW-0691">RNA editing</keyword>
<keyword id="KW-0694">RNA-binding</keyword>
<keyword id="KW-0699">rRNA-binding</keyword>
<name>RR14_ANTAG</name>
<comment type="function">
    <text evidence="1">Binds 16S rRNA, required for the assembly of 30S particles.</text>
</comment>
<comment type="subunit">
    <text evidence="1">Part of the 30S ribosomal subunit.</text>
</comment>
<comment type="subcellular location">
    <subcellularLocation>
        <location>Plastid</location>
        <location>Chloroplast</location>
    </subcellularLocation>
</comment>
<comment type="RNA editing">
    <location>
        <position position="16" evidence="2 3"/>
    </location>
    <location>
        <position position="83" evidence="2 3"/>
    </location>
    <location>
        <position position="93" evidence="2 3"/>
    </location>
</comment>
<comment type="similarity">
    <text evidence="1">Belongs to the universal ribosomal protein uS14 family.</text>
</comment>
<sequence>MAKKSLIQREKKREKLKQKYQAFRKYLKEEMSQTLSIDKKWEIQKQLQSLPRNSTPTRIHRRCFLTGRPRANYRDFNLSRHILREMIHACLLPGVTKASW</sequence>
<organism>
    <name type="scientific">Anthoceros angustus</name>
    <name type="common">Hornwort</name>
    <name type="synonym">Anthoceros formosae</name>
    <dbReference type="NCBI Taxonomy" id="48387"/>
    <lineage>
        <taxon>Eukaryota</taxon>
        <taxon>Viridiplantae</taxon>
        <taxon>Streptophyta</taxon>
        <taxon>Embryophyta</taxon>
        <taxon>Anthocerotophyta</taxon>
        <taxon>Anthocerotopsida</taxon>
        <taxon>Anthocerotidae</taxon>
        <taxon>Anthocerotales</taxon>
        <taxon>Anthocerotaceae</taxon>
        <taxon>Anthoceros</taxon>
    </lineage>
</organism>
<feature type="chain" id="PRO_0000130965" description="Small ribosomal subunit protein uS14c">
    <location>
        <begin position="1"/>
        <end position="100"/>
    </location>
</feature>
<geneLocation type="chloroplast"/>
<accession>Q85CU9</accession>
<proteinExistence type="evidence at transcript level"/>
<gene>
    <name evidence="1" type="primary">rps14</name>
</gene>
<protein>
    <recommendedName>
        <fullName evidence="1">Small ribosomal subunit protein uS14c</fullName>
    </recommendedName>
    <alternativeName>
        <fullName evidence="4">30S ribosomal protein S14, chloroplastic</fullName>
    </alternativeName>
</protein>